<organism>
    <name type="scientific">Escherichia coli (strain K12)</name>
    <dbReference type="NCBI Taxonomy" id="83333"/>
    <lineage>
        <taxon>Bacteria</taxon>
        <taxon>Pseudomonadati</taxon>
        <taxon>Pseudomonadota</taxon>
        <taxon>Gammaproteobacteria</taxon>
        <taxon>Enterobacterales</taxon>
        <taxon>Enterobacteriaceae</taxon>
        <taxon>Escherichia</taxon>
    </lineage>
</organism>
<protein>
    <recommendedName>
        <fullName>tRNA-modifying protein YgfZ</fullName>
    </recommendedName>
</protein>
<feature type="initiator methionine" description="Removed" evidence="3">
    <location>
        <position position="1"/>
    </location>
</feature>
<feature type="chain" id="PRO_0000169834" description="tRNA-modifying protein YgfZ">
    <location>
        <begin position="2"/>
        <end position="326"/>
    </location>
</feature>
<feature type="binding site" evidence="1">
    <location>
        <position position="27"/>
    </location>
    <ligand>
        <name>folate</name>
        <dbReference type="ChEBI" id="CHEBI:62501"/>
    </ligand>
</feature>
<feature type="binding site" evidence="1">
    <location>
        <position position="189"/>
    </location>
    <ligand>
        <name>folate</name>
        <dbReference type="ChEBI" id="CHEBI:62501"/>
    </ligand>
</feature>
<feature type="sequence conflict" description="In Ref. 3; AA sequence." evidence="4" ref="3">
    <original>P</original>
    <variation>D</variation>
    <location>
        <position position="8"/>
    </location>
</feature>
<feature type="helix" evidence="6">
    <location>
        <begin position="14"/>
        <end position="16"/>
    </location>
</feature>
<feature type="strand" evidence="6">
    <location>
        <begin position="19"/>
        <end position="23"/>
    </location>
</feature>
<feature type="strand" evidence="6">
    <location>
        <begin position="27"/>
        <end position="34"/>
    </location>
</feature>
<feature type="helix" evidence="6">
    <location>
        <begin position="37"/>
        <end position="42"/>
    </location>
</feature>
<feature type="strand" evidence="6">
    <location>
        <begin position="45"/>
        <end position="47"/>
    </location>
</feature>
<feature type="helix" evidence="6">
    <location>
        <begin position="49"/>
        <end position="51"/>
    </location>
</feature>
<feature type="strand" evidence="6">
    <location>
        <begin position="57"/>
        <end position="63"/>
    </location>
</feature>
<feature type="strand" evidence="6">
    <location>
        <begin position="69"/>
        <end position="78"/>
    </location>
</feature>
<feature type="strand" evidence="6">
    <location>
        <begin position="81"/>
        <end position="87"/>
    </location>
</feature>
<feature type="helix" evidence="6">
    <location>
        <begin position="88"/>
        <end position="99"/>
    </location>
</feature>
<feature type="strand" evidence="6">
    <location>
        <begin position="103"/>
        <end position="106"/>
    </location>
</feature>
<feature type="strand" evidence="6">
    <location>
        <begin position="108"/>
        <end position="112"/>
    </location>
</feature>
<feature type="strand" evidence="6">
    <location>
        <begin position="114"/>
        <end position="122"/>
    </location>
</feature>
<feature type="helix" evidence="6">
    <location>
        <begin position="125"/>
        <end position="130"/>
    </location>
</feature>
<feature type="strand" evidence="5">
    <location>
        <begin position="139"/>
        <end position="141"/>
    </location>
</feature>
<feature type="strand" evidence="6">
    <location>
        <begin position="143"/>
        <end position="146"/>
    </location>
</feature>
<feature type="strand" evidence="6">
    <location>
        <begin position="149"/>
        <end position="154"/>
    </location>
</feature>
<feature type="strand" evidence="6">
    <location>
        <begin position="156"/>
        <end position="158"/>
    </location>
</feature>
<feature type="strand" evidence="6">
    <location>
        <begin position="160"/>
        <end position="165"/>
    </location>
</feature>
<feature type="helix" evidence="6">
    <location>
        <begin position="167"/>
        <end position="177"/>
    </location>
</feature>
<feature type="turn" evidence="5">
    <location>
        <begin position="178"/>
        <end position="180"/>
    </location>
</feature>
<feature type="strand" evidence="6">
    <location>
        <begin position="181"/>
        <end position="184"/>
    </location>
</feature>
<feature type="helix" evidence="6">
    <location>
        <begin position="186"/>
        <end position="196"/>
    </location>
</feature>
<feature type="helix" evidence="6">
    <location>
        <begin position="203"/>
        <end position="205"/>
    </location>
</feature>
<feature type="helix" evidence="6">
    <location>
        <begin position="211"/>
        <end position="214"/>
    </location>
</feature>
<feature type="helix" evidence="6">
    <location>
        <begin position="216"/>
        <end position="218"/>
    </location>
</feature>
<feature type="strand" evidence="6">
    <location>
        <begin position="224"/>
        <end position="226"/>
    </location>
</feature>
<feature type="helix" evidence="6">
    <location>
        <begin position="232"/>
        <end position="237"/>
    </location>
</feature>
<feature type="strand" evidence="6">
    <location>
        <begin position="246"/>
        <end position="253"/>
    </location>
</feature>
<feature type="strand" evidence="6">
    <location>
        <begin position="265"/>
        <end position="269"/>
    </location>
</feature>
<feature type="strand" evidence="6">
    <location>
        <begin position="272"/>
        <end position="276"/>
    </location>
</feature>
<feature type="strand" evidence="6">
    <location>
        <begin position="278"/>
        <end position="284"/>
    </location>
</feature>
<feature type="strand" evidence="6">
    <location>
        <begin position="290"/>
        <end position="297"/>
    </location>
</feature>
<feature type="strand" evidence="6">
    <location>
        <begin position="306"/>
        <end position="308"/>
    </location>
</feature>
<feature type="strand" evidence="6">
    <location>
        <begin position="315"/>
        <end position="318"/>
    </location>
</feature>
<comment type="function">
    <text evidence="2">Folate-binding protein involved in regulating the level of ATP-DnaA and in the modification of some tRNAs. It is probably a key factor in regulatory networks that act via tRNA modification, such as initiation of chromosomal replication.</text>
</comment>
<comment type="subcellular location">
    <subcellularLocation>
        <location evidence="4">Cytoplasm</location>
    </subcellularLocation>
</comment>
<comment type="similarity">
    <text evidence="4">Belongs to the tRNA-modifying YgfZ family.</text>
</comment>
<proteinExistence type="evidence at protein level"/>
<reference key="1">
    <citation type="journal article" date="1997" name="Science">
        <title>The complete genome sequence of Escherichia coli K-12.</title>
        <authorList>
            <person name="Blattner F.R."/>
            <person name="Plunkett G. III"/>
            <person name="Bloch C.A."/>
            <person name="Perna N.T."/>
            <person name="Burland V."/>
            <person name="Riley M."/>
            <person name="Collado-Vides J."/>
            <person name="Glasner J.D."/>
            <person name="Rode C.K."/>
            <person name="Mayhew G.F."/>
            <person name="Gregor J."/>
            <person name="Davis N.W."/>
            <person name="Kirkpatrick H.A."/>
            <person name="Goeden M.A."/>
            <person name="Rose D.J."/>
            <person name="Mau B."/>
            <person name="Shao Y."/>
        </authorList>
    </citation>
    <scope>NUCLEOTIDE SEQUENCE [LARGE SCALE GENOMIC DNA]</scope>
    <source>
        <strain>K12 / MG1655 / ATCC 47076</strain>
    </source>
</reference>
<reference key="2">
    <citation type="journal article" date="2006" name="Mol. Syst. Biol.">
        <title>Highly accurate genome sequences of Escherichia coli K-12 strains MG1655 and W3110.</title>
        <authorList>
            <person name="Hayashi K."/>
            <person name="Morooka N."/>
            <person name="Yamamoto Y."/>
            <person name="Fujita K."/>
            <person name="Isono K."/>
            <person name="Choi S."/>
            <person name="Ohtsubo E."/>
            <person name="Baba T."/>
            <person name="Wanner B.L."/>
            <person name="Mori H."/>
            <person name="Horiuchi T."/>
        </authorList>
    </citation>
    <scope>NUCLEOTIDE SEQUENCE [LARGE SCALE GENOMIC DNA]</scope>
    <source>
        <strain>K12 / W3110 / ATCC 27325 / DSM 5911</strain>
    </source>
</reference>
<reference key="3">
    <citation type="journal article" date="1997" name="Electrophoresis">
        <title>Comparing the predicted and observed properties of proteins encoded in the genome of Escherichia coli K-12.</title>
        <authorList>
            <person name="Link A.J."/>
            <person name="Robison K."/>
            <person name="Church G.M."/>
        </authorList>
    </citation>
    <scope>PROTEIN SEQUENCE OF 2-13</scope>
    <source>
        <strain>K12 / EMG2</strain>
    </source>
</reference>
<reference key="4">
    <citation type="journal article" date="1999" name="Electrophoresis">
        <title>Enrichment of low abundance proteins of Escherichia coli by hydroxyapatite chromatography.</title>
        <authorList>
            <person name="Fountoulakis M."/>
            <person name="Takacs M.-F."/>
            <person name="Berndt P."/>
            <person name="Langen H."/>
            <person name="Takacs B."/>
        </authorList>
    </citation>
    <scope>IDENTIFICATION BY MASS SPECTROMETRY</scope>
    <source>
        <strain>B / BL21</strain>
    </source>
</reference>
<reference key="5">
    <citation type="journal article" date="2006" name="Mol. Microbiol.">
        <title>Involvement of the Escherichia coli folate-binding protein YgfZ in RNA modification and regulation of chromosomal replication initiation.</title>
        <authorList>
            <person name="Ote T."/>
            <person name="Hashimoto M."/>
            <person name="Ikeuchi Y."/>
            <person name="Su'etsugu M."/>
            <person name="Suzuki T."/>
            <person name="Katayama T."/>
            <person name="Kato J."/>
        </authorList>
    </citation>
    <scope>FUNCTION</scope>
    <source>
        <strain>K12 / MG1655 / ATCC 47076</strain>
    </source>
</reference>
<reference key="6">
    <citation type="journal article" date="2004" name="J. Bacteriol.">
        <title>Crystal structure of the YgfZ protein from Escherichia coli suggests a folate-dependent regulatory role in one-carbon metabolism.</title>
        <authorList>
            <person name="Teplyakov A."/>
            <person name="Obmolova G."/>
            <person name="Sarikaya E."/>
            <person name="Pullalarevu S."/>
            <person name="Krajewski W."/>
            <person name="Galkin A."/>
            <person name="Howard A.J."/>
            <person name="Herzberg O."/>
            <person name="Gilliland G.L."/>
        </authorList>
    </citation>
    <scope>X-RAY CRYSTALLOGRAPHY (2.8 ANGSTROMS) OF 1-325</scope>
    <scope>FOLATE BINDING</scope>
    <source>
        <strain>K12 / MG1655 / ATCC 47076</strain>
    </source>
</reference>
<gene>
    <name type="primary">ygfZ</name>
    <name type="synonym">yzzW</name>
    <name type="ordered locus">b2898</name>
    <name type="ordered locus">JW2866</name>
</gene>
<keyword id="KW-0002">3D-structure</keyword>
<keyword id="KW-0963">Cytoplasm</keyword>
<keyword id="KW-0903">Direct protein sequencing</keyword>
<keyword id="KW-0290">Folate-binding</keyword>
<keyword id="KW-1185">Reference proteome</keyword>
<keyword id="KW-0819">tRNA processing</keyword>
<dbReference type="EMBL" id="U28375">
    <property type="protein sequence ID" value="AAA83079.1"/>
    <property type="molecule type" value="Genomic_DNA"/>
</dbReference>
<dbReference type="EMBL" id="U00096">
    <property type="protein sequence ID" value="AAC75936.1"/>
    <property type="molecule type" value="Genomic_DNA"/>
</dbReference>
<dbReference type="EMBL" id="AP009048">
    <property type="protein sequence ID" value="BAE76963.1"/>
    <property type="molecule type" value="Genomic_DNA"/>
</dbReference>
<dbReference type="PIR" id="B65074">
    <property type="entry name" value="B65074"/>
</dbReference>
<dbReference type="RefSeq" id="NP_417374.1">
    <property type="nucleotide sequence ID" value="NC_000913.3"/>
</dbReference>
<dbReference type="RefSeq" id="WP_000886062.1">
    <property type="nucleotide sequence ID" value="NZ_STEB01000001.1"/>
</dbReference>
<dbReference type="PDB" id="1NRK">
    <property type="method" value="X-ray"/>
    <property type="resolution" value="2.80 A"/>
    <property type="chains" value="A=1-325"/>
</dbReference>
<dbReference type="PDB" id="1VLY">
    <property type="method" value="X-ray"/>
    <property type="resolution" value="1.30 A"/>
    <property type="chains" value="A=1-326"/>
</dbReference>
<dbReference type="PDBsum" id="1NRK"/>
<dbReference type="PDBsum" id="1VLY"/>
<dbReference type="SMR" id="P0ADE8"/>
<dbReference type="BioGRID" id="4261457">
    <property type="interactions" value="793"/>
</dbReference>
<dbReference type="DIP" id="DIP-48117N"/>
<dbReference type="FunCoup" id="P0ADE8">
    <property type="interactions" value="454"/>
</dbReference>
<dbReference type="IntAct" id="P0ADE8">
    <property type="interactions" value="6"/>
</dbReference>
<dbReference type="STRING" id="511145.b2898"/>
<dbReference type="jPOST" id="P0ADE8"/>
<dbReference type="PaxDb" id="511145-b2898"/>
<dbReference type="EnsemblBacteria" id="AAC75936">
    <property type="protein sequence ID" value="AAC75936"/>
    <property type="gene ID" value="b2898"/>
</dbReference>
<dbReference type="GeneID" id="75205265"/>
<dbReference type="GeneID" id="947384"/>
<dbReference type="KEGG" id="ecj:JW2866"/>
<dbReference type="KEGG" id="eco:b2898"/>
<dbReference type="KEGG" id="ecoc:C3026_15890"/>
<dbReference type="PATRIC" id="fig|1411691.4.peg.3834"/>
<dbReference type="EchoBASE" id="EB2549"/>
<dbReference type="eggNOG" id="COG0354">
    <property type="taxonomic scope" value="Bacteria"/>
</dbReference>
<dbReference type="HOGENOM" id="CLU_007884_6_1_6"/>
<dbReference type="InParanoid" id="P0ADE8"/>
<dbReference type="OMA" id="FVPQMLN"/>
<dbReference type="OrthoDB" id="9796287at2"/>
<dbReference type="PhylomeDB" id="P0ADE8"/>
<dbReference type="BioCyc" id="EcoCyc:G7511-MONOMER"/>
<dbReference type="EvolutionaryTrace" id="P0ADE8"/>
<dbReference type="PRO" id="PR:P0ADE8"/>
<dbReference type="Proteomes" id="UP000000625">
    <property type="component" value="Chromosome"/>
</dbReference>
<dbReference type="GO" id="GO:0005829">
    <property type="term" value="C:cytosol"/>
    <property type="evidence" value="ECO:0000314"/>
    <property type="project" value="EcoCyc"/>
</dbReference>
<dbReference type="GO" id="GO:0005542">
    <property type="term" value="F:folic acid binding"/>
    <property type="evidence" value="ECO:0000314"/>
    <property type="project" value="EcoCyc"/>
</dbReference>
<dbReference type="GO" id="GO:0016226">
    <property type="term" value="P:iron-sulfur cluster assembly"/>
    <property type="evidence" value="ECO:0000318"/>
    <property type="project" value="GO_Central"/>
</dbReference>
<dbReference type="GO" id="GO:0009451">
    <property type="term" value="P:RNA modification"/>
    <property type="evidence" value="ECO:0007669"/>
    <property type="project" value="InterPro"/>
</dbReference>
<dbReference type="GO" id="GO:0008033">
    <property type="term" value="P:tRNA processing"/>
    <property type="evidence" value="ECO:0007669"/>
    <property type="project" value="UniProtKB-UniRule"/>
</dbReference>
<dbReference type="FunFam" id="2.40.30.160:FF:000001">
    <property type="entry name" value="tRNA-modifying protein YgfZ"/>
    <property type="match status" value="1"/>
</dbReference>
<dbReference type="FunFam" id="3.30.70.1400:FF:000002">
    <property type="entry name" value="tRNA-modifying protein YgfZ"/>
    <property type="match status" value="1"/>
</dbReference>
<dbReference type="FunFam" id="3.30.70.1630:FF:000001">
    <property type="entry name" value="tRNA-modifying protein YgfZ"/>
    <property type="match status" value="1"/>
</dbReference>
<dbReference type="Gene3D" id="2.40.30.160">
    <property type="match status" value="1"/>
</dbReference>
<dbReference type="Gene3D" id="3.30.70.1630">
    <property type="match status" value="1"/>
</dbReference>
<dbReference type="Gene3D" id="3.30.70.1400">
    <property type="entry name" value="Aminomethyltransferase beta-barrel domains"/>
    <property type="match status" value="1"/>
</dbReference>
<dbReference type="HAMAP" id="MF_01175">
    <property type="entry name" value="tRNA_modifying_YgfZ"/>
    <property type="match status" value="1"/>
</dbReference>
<dbReference type="InterPro" id="IPR006222">
    <property type="entry name" value="GCV_T_N"/>
</dbReference>
<dbReference type="InterPro" id="IPR029043">
    <property type="entry name" value="GcvT/YgfZ_C"/>
</dbReference>
<dbReference type="InterPro" id="IPR023758">
    <property type="entry name" value="tRNA-modifying_YgfZ"/>
</dbReference>
<dbReference type="InterPro" id="IPR045179">
    <property type="entry name" value="YgfZ/GcvT"/>
</dbReference>
<dbReference type="InterPro" id="IPR017703">
    <property type="entry name" value="YgfZ/GcvT_CS"/>
</dbReference>
<dbReference type="InterPro" id="IPR048451">
    <property type="entry name" value="YgfZ_barrel"/>
</dbReference>
<dbReference type="NCBIfam" id="NF007110">
    <property type="entry name" value="PRK09559.1"/>
    <property type="match status" value="1"/>
</dbReference>
<dbReference type="NCBIfam" id="TIGR03317">
    <property type="entry name" value="ygfZ_signature"/>
    <property type="match status" value="1"/>
</dbReference>
<dbReference type="PANTHER" id="PTHR22602">
    <property type="entry name" value="TRANSFERASE CAF17, MITOCHONDRIAL-RELATED"/>
    <property type="match status" value="1"/>
</dbReference>
<dbReference type="PANTHER" id="PTHR22602:SF0">
    <property type="entry name" value="TRANSFERASE CAF17, MITOCHONDRIAL-RELATED"/>
    <property type="match status" value="1"/>
</dbReference>
<dbReference type="Pfam" id="PF01571">
    <property type="entry name" value="GCV_T"/>
    <property type="match status" value="1"/>
</dbReference>
<dbReference type="Pfam" id="PF21130">
    <property type="entry name" value="YgfZ_barrel"/>
    <property type="match status" value="1"/>
</dbReference>
<dbReference type="SUPFAM" id="SSF101790">
    <property type="entry name" value="Aminomethyltransferase beta-barrel domain"/>
    <property type="match status" value="1"/>
</dbReference>
<dbReference type="SUPFAM" id="SSF103025">
    <property type="entry name" value="Folate-binding domain"/>
    <property type="match status" value="1"/>
</dbReference>
<name>YGFZ_ECOLI</name>
<sequence length="326" mass="36094">MAFTPFPPRQPTASARLPLTLMTLDDWALATITGADSEKYMQGQVTADVSQMAEDQHLLAAHCDAKGKMWSNLRLFRDGDGFAWIERRSVREPQLTELKKYAVFSKVTIAPDDERVLLGVAGFQARAALANLFSELPSKEKQVVKEGATTLLWFEHPAERFLIVTDEATANMLTDKLRGEAELNNSQQWLALNIEAGFPVIDAANSGQFIPQATNLQALGGISFKKGCYTGQEMVARAKFRGANKRALWLLAGSASRLPEAGEDLELKMGENWRRTGTVLAAVKLEDGQVVVQVVMNNDMEPDSIFRVRDDANTLHIEPLPYSLEE</sequence>
<accession>P0ADE8</accession>
<accession>P39179</accession>
<accession>Q2M9U3</accession>
<accession>Q46826</accession>
<evidence type="ECO:0000255" key="1"/>
<evidence type="ECO:0000269" key="2">
    <source>
    </source>
</evidence>
<evidence type="ECO:0000269" key="3">
    <source>
    </source>
</evidence>
<evidence type="ECO:0000305" key="4"/>
<evidence type="ECO:0007829" key="5">
    <source>
        <dbReference type="PDB" id="1NRK"/>
    </source>
</evidence>
<evidence type="ECO:0007829" key="6">
    <source>
        <dbReference type="PDB" id="1VLY"/>
    </source>
</evidence>